<reference key="1">
    <citation type="journal article" date="2004" name="Nature">
        <title>Genome evolution in yeasts.</title>
        <authorList>
            <person name="Dujon B."/>
            <person name="Sherman D."/>
            <person name="Fischer G."/>
            <person name="Durrens P."/>
            <person name="Casaregola S."/>
            <person name="Lafontaine I."/>
            <person name="de Montigny J."/>
            <person name="Marck C."/>
            <person name="Neuveglise C."/>
            <person name="Talla E."/>
            <person name="Goffard N."/>
            <person name="Frangeul L."/>
            <person name="Aigle M."/>
            <person name="Anthouard V."/>
            <person name="Babour A."/>
            <person name="Barbe V."/>
            <person name="Barnay S."/>
            <person name="Blanchin S."/>
            <person name="Beckerich J.-M."/>
            <person name="Beyne E."/>
            <person name="Bleykasten C."/>
            <person name="Boisrame A."/>
            <person name="Boyer J."/>
            <person name="Cattolico L."/>
            <person name="Confanioleri F."/>
            <person name="de Daruvar A."/>
            <person name="Despons L."/>
            <person name="Fabre E."/>
            <person name="Fairhead C."/>
            <person name="Ferry-Dumazet H."/>
            <person name="Groppi A."/>
            <person name="Hantraye F."/>
            <person name="Hennequin C."/>
            <person name="Jauniaux N."/>
            <person name="Joyet P."/>
            <person name="Kachouri R."/>
            <person name="Kerrest A."/>
            <person name="Koszul R."/>
            <person name="Lemaire M."/>
            <person name="Lesur I."/>
            <person name="Ma L."/>
            <person name="Muller H."/>
            <person name="Nicaud J.-M."/>
            <person name="Nikolski M."/>
            <person name="Oztas S."/>
            <person name="Ozier-Kalogeropoulos O."/>
            <person name="Pellenz S."/>
            <person name="Potier S."/>
            <person name="Richard G.-F."/>
            <person name="Straub M.-L."/>
            <person name="Suleau A."/>
            <person name="Swennen D."/>
            <person name="Tekaia F."/>
            <person name="Wesolowski-Louvel M."/>
            <person name="Westhof E."/>
            <person name="Wirth B."/>
            <person name="Zeniou-Meyer M."/>
            <person name="Zivanovic Y."/>
            <person name="Bolotin-Fukuhara M."/>
            <person name="Thierry A."/>
            <person name="Bouchier C."/>
            <person name="Caudron B."/>
            <person name="Scarpelli C."/>
            <person name="Gaillardin C."/>
            <person name="Weissenbach J."/>
            <person name="Wincker P."/>
            <person name="Souciet J.-L."/>
        </authorList>
    </citation>
    <scope>NUCLEOTIDE SEQUENCE [LARGE SCALE GENOMIC DNA]</scope>
    <source>
        <strain>ATCC 36239 / CBS 767 / BCRC 21394 / JCM 1990 / NBRC 0083 / IGC 2968</strain>
    </source>
</reference>
<dbReference type="EMBL" id="CR382138">
    <property type="protein sequence ID" value="CAG89890.1"/>
    <property type="molecule type" value="Genomic_DNA"/>
</dbReference>
<dbReference type="RefSeq" id="XP_461471.1">
    <property type="nucleotide sequence ID" value="XM_461471.1"/>
</dbReference>
<dbReference type="SMR" id="Q6BK00"/>
<dbReference type="FunCoup" id="Q6BK00">
    <property type="interactions" value="206"/>
</dbReference>
<dbReference type="STRING" id="284592.Q6BK00"/>
<dbReference type="GeneID" id="2903482"/>
<dbReference type="KEGG" id="dha:DEHA2F26026g"/>
<dbReference type="VEuPathDB" id="FungiDB:DEHA2F26026g"/>
<dbReference type="eggNOG" id="KOG4444">
    <property type="taxonomic scope" value="Eukaryota"/>
</dbReference>
<dbReference type="HOGENOM" id="CLU_017002_0_0_1"/>
<dbReference type="InParanoid" id="Q6BK00"/>
<dbReference type="OMA" id="WLYKQQL"/>
<dbReference type="OrthoDB" id="45930at2759"/>
<dbReference type="Proteomes" id="UP000000599">
    <property type="component" value="Chromosome F"/>
</dbReference>
<dbReference type="GO" id="GO:0005778">
    <property type="term" value="C:peroxisomal membrane"/>
    <property type="evidence" value="ECO:0007669"/>
    <property type="project" value="UniProtKB-SubCell"/>
</dbReference>
<dbReference type="GO" id="GO:0030674">
    <property type="term" value="F:protein-macromolecule adaptor activity"/>
    <property type="evidence" value="ECO:0007669"/>
    <property type="project" value="TreeGrafter"/>
</dbReference>
<dbReference type="GO" id="GO:0045046">
    <property type="term" value="P:protein import into peroxisome membrane"/>
    <property type="evidence" value="ECO:0007669"/>
    <property type="project" value="TreeGrafter"/>
</dbReference>
<dbReference type="InterPro" id="IPR006966">
    <property type="entry name" value="Peroxin-3"/>
</dbReference>
<dbReference type="PANTHER" id="PTHR28080">
    <property type="entry name" value="PEROXISOMAL BIOGENESIS FACTOR 3"/>
    <property type="match status" value="1"/>
</dbReference>
<dbReference type="PANTHER" id="PTHR28080:SF1">
    <property type="entry name" value="PEROXISOMAL BIOGENESIS FACTOR 3"/>
    <property type="match status" value="1"/>
</dbReference>
<dbReference type="Pfam" id="PF04882">
    <property type="entry name" value="Peroxin-3"/>
    <property type="match status" value="1"/>
</dbReference>
<proteinExistence type="inferred from homology"/>
<comment type="function">
    <text evidence="1">Involved in peroxisome biosynthesis.</text>
</comment>
<comment type="subcellular location">
    <subcellularLocation>
        <location evidence="1">Peroxisome membrane</location>
        <topology evidence="1">Single-pass membrane protein</topology>
    </subcellularLocation>
</comment>
<comment type="similarity">
    <text evidence="3">Belongs to the peroxin-3 family.</text>
</comment>
<gene>
    <name type="primary">PEX3</name>
    <name type="ordered locus">DEHA2F26026g</name>
</gene>
<sequence>MPIFSSLNSFLRRHKKKLIVTATLTFSAYFLVNQFIIKKLKNFQNSLRQELFVKEQIKRRFVQTQNDCYLTILALLPVLTQPIINHLPIELITQALKLKKTNSNPTPQEISDSLLTTDNLTMHQNTNDSSDLSHYMSLSKTELWKLLKIKTLTRTLTLMYSISGLLLLTRLQLNILARRSYLESAIILAGGKVNDTETSQDYFIEQSYLSLSWWLLNKGWLKISDLVEKVVTEKFNTINARTELSINKFDDLLCEMVNELSTNHNQEILNAVFPISYDNLIESLLNTNPELIKELDIEDSIMLKLINETTYLVSNEAFGDILINMVDSCKSTLIENLLLSLDPENAYTNQEKVIDISNIKQFKLANLLAQLSIQCGVLCDNNNLMNDTFSNELSGNIYMNNLNEIESLDEFSASIYSNFE</sequence>
<organism>
    <name type="scientific">Debaryomyces hansenii (strain ATCC 36239 / CBS 767 / BCRC 21394 / JCM 1990 / NBRC 0083 / IGC 2968)</name>
    <name type="common">Yeast</name>
    <name type="synonym">Torulaspora hansenii</name>
    <dbReference type="NCBI Taxonomy" id="284592"/>
    <lineage>
        <taxon>Eukaryota</taxon>
        <taxon>Fungi</taxon>
        <taxon>Dikarya</taxon>
        <taxon>Ascomycota</taxon>
        <taxon>Saccharomycotina</taxon>
        <taxon>Pichiomycetes</taxon>
        <taxon>Debaryomycetaceae</taxon>
        <taxon>Debaryomyces</taxon>
    </lineage>
</organism>
<protein>
    <recommendedName>
        <fullName>Peroxisomal biogenesis factor 3</fullName>
    </recommendedName>
    <alternativeName>
        <fullName>Peroxin-3</fullName>
    </alternativeName>
</protein>
<keyword id="KW-0472">Membrane</keyword>
<keyword id="KW-0576">Peroxisome</keyword>
<keyword id="KW-0962">Peroxisome biogenesis</keyword>
<keyword id="KW-1185">Reference proteome</keyword>
<keyword id="KW-0812">Transmembrane</keyword>
<keyword id="KW-1133">Transmembrane helix</keyword>
<name>PEX3_DEBHA</name>
<feature type="chain" id="PRO_0000208742" description="Peroxisomal biogenesis factor 3">
    <location>
        <begin position="1"/>
        <end position="420"/>
    </location>
</feature>
<feature type="topological domain" description="Peroxisomal" evidence="2">
    <location>
        <begin position="1"/>
        <end position="16"/>
    </location>
</feature>
<feature type="transmembrane region" description="Helical" evidence="2">
    <location>
        <begin position="17"/>
        <end position="37"/>
    </location>
</feature>
<feature type="topological domain" description="Cytoplasmic" evidence="2">
    <location>
        <begin position="38"/>
        <end position="420"/>
    </location>
</feature>
<evidence type="ECO:0000250" key="1"/>
<evidence type="ECO:0000255" key="2"/>
<evidence type="ECO:0000305" key="3"/>
<accession>Q6BK00</accession>